<keyword id="KW-0378">Hydrolase</keyword>
<keyword id="KW-0460">Magnesium</keyword>
<keyword id="KW-0479">Metal-binding</keyword>
<keyword id="KW-0546">Nucleotide metabolism</keyword>
<keyword id="KW-0547">Nucleotide-binding</keyword>
<protein>
    <recommendedName>
        <fullName evidence="1">dITP/XTP pyrophosphatase</fullName>
        <ecNumber evidence="1">3.6.1.66</ecNumber>
    </recommendedName>
    <alternativeName>
        <fullName evidence="1">Non-canonical purine NTP pyrophosphatase</fullName>
    </alternativeName>
    <alternativeName>
        <fullName evidence="1">Non-standard purine NTP pyrophosphatase</fullName>
    </alternativeName>
    <alternativeName>
        <fullName evidence="1">Nucleoside-triphosphate diphosphatase</fullName>
    </alternativeName>
    <alternativeName>
        <fullName evidence="1">Nucleoside-triphosphate pyrophosphatase</fullName>
        <shortName evidence="1">NTPase</shortName>
    </alternativeName>
</protein>
<name>IXTPA_ACIAD</name>
<comment type="function">
    <text evidence="1">Pyrophosphatase that catalyzes the hydrolysis of nucleoside triphosphates to their monophosphate derivatives, with a high preference for the non-canonical purine nucleotides XTP (xanthosine triphosphate), dITP (deoxyinosine triphosphate) and ITP. Seems to function as a house-cleaning enzyme that removes non-canonical purine nucleotides from the nucleotide pool, thus preventing their incorporation into DNA/RNA and avoiding chromosomal lesions.</text>
</comment>
<comment type="catalytic activity">
    <reaction evidence="1">
        <text>XTP + H2O = XMP + diphosphate + H(+)</text>
        <dbReference type="Rhea" id="RHEA:28610"/>
        <dbReference type="ChEBI" id="CHEBI:15377"/>
        <dbReference type="ChEBI" id="CHEBI:15378"/>
        <dbReference type="ChEBI" id="CHEBI:33019"/>
        <dbReference type="ChEBI" id="CHEBI:57464"/>
        <dbReference type="ChEBI" id="CHEBI:61314"/>
        <dbReference type="EC" id="3.6.1.66"/>
    </reaction>
</comment>
<comment type="catalytic activity">
    <reaction evidence="1">
        <text>dITP + H2O = dIMP + diphosphate + H(+)</text>
        <dbReference type="Rhea" id="RHEA:28342"/>
        <dbReference type="ChEBI" id="CHEBI:15377"/>
        <dbReference type="ChEBI" id="CHEBI:15378"/>
        <dbReference type="ChEBI" id="CHEBI:33019"/>
        <dbReference type="ChEBI" id="CHEBI:61194"/>
        <dbReference type="ChEBI" id="CHEBI:61382"/>
        <dbReference type="EC" id="3.6.1.66"/>
    </reaction>
</comment>
<comment type="catalytic activity">
    <reaction evidence="1">
        <text>ITP + H2O = IMP + diphosphate + H(+)</text>
        <dbReference type="Rhea" id="RHEA:29399"/>
        <dbReference type="ChEBI" id="CHEBI:15377"/>
        <dbReference type="ChEBI" id="CHEBI:15378"/>
        <dbReference type="ChEBI" id="CHEBI:33019"/>
        <dbReference type="ChEBI" id="CHEBI:58053"/>
        <dbReference type="ChEBI" id="CHEBI:61402"/>
        <dbReference type="EC" id="3.6.1.66"/>
    </reaction>
</comment>
<comment type="cofactor">
    <cofactor evidence="1">
        <name>Mg(2+)</name>
        <dbReference type="ChEBI" id="CHEBI:18420"/>
    </cofactor>
    <text evidence="1">Binds 1 Mg(2+) ion per subunit.</text>
</comment>
<comment type="subunit">
    <text evidence="1">Homodimer.</text>
</comment>
<comment type="similarity">
    <text evidence="1">Belongs to the HAM1 NTPase family.</text>
</comment>
<comment type="sequence caution" evidence="2">
    <conflict type="erroneous initiation">
        <sequence resource="EMBL-CDS" id="CAG67452"/>
    </conflict>
</comment>
<dbReference type="EC" id="3.6.1.66" evidence="1"/>
<dbReference type="EMBL" id="CR543861">
    <property type="protein sequence ID" value="CAG67452.1"/>
    <property type="status" value="ALT_INIT"/>
    <property type="molecule type" value="Genomic_DNA"/>
</dbReference>
<dbReference type="SMR" id="Q6FEQ6"/>
<dbReference type="STRING" id="202950.GCA_001485005_00764"/>
<dbReference type="GeneID" id="45233005"/>
<dbReference type="KEGG" id="aci:ACIAD0526"/>
<dbReference type="eggNOG" id="COG0127">
    <property type="taxonomic scope" value="Bacteria"/>
</dbReference>
<dbReference type="HOGENOM" id="CLU_082080_0_3_6"/>
<dbReference type="OrthoDB" id="9807456at2"/>
<dbReference type="BioCyc" id="ASP62977:ACIAD_RS02385-MONOMER"/>
<dbReference type="Proteomes" id="UP000000430">
    <property type="component" value="Chromosome"/>
</dbReference>
<dbReference type="GO" id="GO:0005829">
    <property type="term" value="C:cytosol"/>
    <property type="evidence" value="ECO:0007669"/>
    <property type="project" value="TreeGrafter"/>
</dbReference>
<dbReference type="GO" id="GO:0035870">
    <property type="term" value="F:dITP diphosphatase activity"/>
    <property type="evidence" value="ECO:0007669"/>
    <property type="project" value="RHEA"/>
</dbReference>
<dbReference type="GO" id="GO:0036220">
    <property type="term" value="F:ITP diphosphatase activity"/>
    <property type="evidence" value="ECO:0007669"/>
    <property type="project" value="UniProtKB-EC"/>
</dbReference>
<dbReference type="GO" id="GO:0046872">
    <property type="term" value="F:metal ion binding"/>
    <property type="evidence" value="ECO:0007669"/>
    <property type="project" value="UniProtKB-KW"/>
</dbReference>
<dbReference type="GO" id="GO:0000166">
    <property type="term" value="F:nucleotide binding"/>
    <property type="evidence" value="ECO:0007669"/>
    <property type="project" value="UniProtKB-KW"/>
</dbReference>
<dbReference type="GO" id="GO:0017111">
    <property type="term" value="F:ribonucleoside triphosphate phosphatase activity"/>
    <property type="evidence" value="ECO:0007669"/>
    <property type="project" value="InterPro"/>
</dbReference>
<dbReference type="GO" id="GO:0036222">
    <property type="term" value="F:XTP diphosphatase activity"/>
    <property type="evidence" value="ECO:0007669"/>
    <property type="project" value="RHEA"/>
</dbReference>
<dbReference type="GO" id="GO:0009117">
    <property type="term" value="P:nucleotide metabolic process"/>
    <property type="evidence" value="ECO:0007669"/>
    <property type="project" value="UniProtKB-KW"/>
</dbReference>
<dbReference type="GO" id="GO:0009146">
    <property type="term" value="P:purine nucleoside triphosphate catabolic process"/>
    <property type="evidence" value="ECO:0007669"/>
    <property type="project" value="UniProtKB-UniRule"/>
</dbReference>
<dbReference type="CDD" id="cd00515">
    <property type="entry name" value="HAM1"/>
    <property type="match status" value="1"/>
</dbReference>
<dbReference type="FunFam" id="3.90.950.10:FF:000001">
    <property type="entry name" value="dITP/XTP pyrophosphatase"/>
    <property type="match status" value="1"/>
</dbReference>
<dbReference type="Gene3D" id="3.90.950.10">
    <property type="match status" value="1"/>
</dbReference>
<dbReference type="HAMAP" id="MF_01405">
    <property type="entry name" value="Non_canon_purine_NTPase"/>
    <property type="match status" value="1"/>
</dbReference>
<dbReference type="InterPro" id="IPR020922">
    <property type="entry name" value="dITP/XTP_pyrophosphatase"/>
</dbReference>
<dbReference type="InterPro" id="IPR029001">
    <property type="entry name" value="ITPase-like_fam"/>
</dbReference>
<dbReference type="InterPro" id="IPR002637">
    <property type="entry name" value="RdgB/HAM1"/>
</dbReference>
<dbReference type="NCBIfam" id="TIGR00042">
    <property type="entry name" value="RdgB/HAM1 family non-canonical purine NTP pyrophosphatase"/>
    <property type="match status" value="1"/>
</dbReference>
<dbReference type="PANTHER" id="PTHR11067:SF9">
    <property type="entry name" value="INOSINE TRIPHOSPHATE PYROPHOSPHATASE"/>
    <property type="match status" value="1"/>
</dbReference>
<dbReference type="PANTHER" id="PTHR11067">
    <property type="entry name" value="INOSINE TRIPHOSPHATE PYROPHOSPHATASE/HAM1 PROTEIN"/>
    <property type="match status" value="1"/>
</dbReference>
<dbReference type="Pfam" id="PF01725">
    <property type="entry name" value="Ham1p_like"/>
    <property type="match status" value="1"/>
</dbReference>
<dbReference type="SUPFAM" id="SSF52972">
    <property type="entry name" value="ITPase-like"/>
    <property type="match status" value="1"/>
</dbReference>
<proteinExistence type="inferred from homology"/>
<organism>
    <name type="scientific">Acinetobacter baylyi (strain ATCC 33305 / BD413 / ADP1)</name>
    <dbReference type="NCBI Taxonomy" id="62977"/>
    <lineage>
        <taxon>Bacteria</taxon>
        <taxon>Pseudomonadati</taxon>
        <taxon>Pseudomonadota</taxon>
        <taxon>Gammaproteobacteria</taxon>
        <taxon>Moraxellales</taxon>
        <taxon>Moraxellaceae</taxon>
        <taxon>Acinetobacter</taxon>
    </lineage>
</organism>
<accession>Q6FEQ6</accession>
<gene>
    <name type="ordered locus">ACIAD0526</name>
</gene>
<reference key="1">
    <citation type="journal article" date="2004" name="Nucleic Acids Res.">
        <title>Unique features revealed by the genome sequence of Acinetobacter sp. ADP1, a versatile and naturally transformation competent bacterium.</title>
        <authorList>
            <person name="Barbe V."/>
            <person name="Vallenet D."/>
            <person name="Fonknechten N."/>
            <person name="Kreimeyer A."/>
            <person name="Oztas S."/>
            <person name="Labarre L."/>
            <person name="Cruveiller S."/>
            <person name="Robert C."/>
            <person name="Duprat S."/>
            <person name="Wincker P."/>
            <person name="Ornston L.N."/>
            <person name="Weissenbach J."/>
            <person name="Marliere P."/>
            <person name="Cohen G.N."/>
            <person name="Medigue C."/>
        </authorList>
    </citation>
    <scope>NUCLEOTIDE SEQUENCE [LARGE SCALE GENOMIC DNA]</scope>
    <source>
        <strain>ATCC 33305 / BD413 / ADP1</strain>
    </source>
</reference>
<sequence length="210" mass="23177">MSAPHWLSQGTLVLASNNKGKITEFEKLFAELQLPVDVIPQGQLNIPDAIEDGLSFVENAIIKARHASKISGKPAIADDSGICVPVLGGAPGIYSARYAGDHGNDAANNEKLLHDLKPFRNAEQAIQGMFVCVLALVEHAEDPLPQIFQGFWHGEILEQARGEHGFGYDPLFWLSELKMSSAEMSKEEKNKISHRGQAMQRFRESLMTRE</sequence>
<evidence type="ECO:0000255" key="1">
    <source>
        <dbReference type="HAMAP-Rule" id="MF_01405"/>
    </source>
</evidence>
<evidence type="ECO:0000305" key="2"/>
<feature type="chain" id="PRO_0000178114" description="dITP/XTP pyrophosphatase">
    <location>
        <begin position="1"/>
        <end position="210"/>
    </location>
</feature>
<feature type="active site" description="Proton acceptor" evidence="1">
    <location>
        <position position="79"/>
    </location>
</feature>
<feature type="binding site" evidence="1">
    <location>
        <begin position="16"/>
        <end position="21"/>
    </location>
    <ligand>
        <name>substrate</name>
    </ligand>
</feature>
<feature type="binding site" evidence="1">
    <location>
        <position position="79"/>
    </location>
    <ligand>
        <name>Mg(2+)</name>
        <dbReference type="ChEBI" id="CHEBI:18420"/>
    </ligand>
</feature>
<feature type="binding site" evidence="1">
    <location>
        <position position="80"/>
    </location>
    <ligand>
        <name>substrate</name>
    </ligand>
</feature>
<feature type="binding site" evidence="1">
    <location>
        <begin position="166"/>
        <end position="169"/>
    </location>
    <ligand>
        <name>substrate</name>
    </ligand>
</feature>
<feature type="binding site" evidence="1">
    <location>
        <position position="189"/>
    </location>
    <ligand>
        <name>substrate</name>
    </ligand>
</feature>
<feature type="binding site" evidence="1">
    <location>
        <begin position="194"/>
        <end position="195"/>
    </location>
    <ligand>
        <name>substrate</name>
    </ligand>
</feature>